<organism>
    <name type="scientific">Thermosynechococcus vestitus (strain NIES-2133 / IAM M-273 / BP-1)</name>
    <dbReference type="NCBI Taxonomy" id="197221"/>
    <lineage>
        <taxon>Bacteria</taxon>
        <taxon>Bacillati</taxon>
        <taxon>Cyanobacteriota</taxon>
        <taxon>Cyanophyceae</taxon>
        <taxon>Acaryochloridales</taxon>
        <taxon>Thermosynechococcaceae</taxon>
        <taxon>Thermosynechococcus</taxon>
    </lineage>
</organism>
<feature type="chain" id="PRO_0000136044" description="Shikimate dehydrogenase (NADP(+))">
    <location>
        <begin position="1"/>
        <end position="286"/>
    </location>
</feature>
<feature type="active site" description="Proton acceptor" evidence="1">
    <location>
        <position position="72"/>
    </location>
</feature>
<feature type="binding site" evidence="1">
    <location>
        <begin position="21"/>
        <end position="23"/>
    </location>
    <ligand>
        <name>shikimate</name>
        <dbReference type="ChEBI" id="CHEBI:36208"/>
    </ligand>
</feature>
<feature type="binding site" evidence="1">
    <location>
        <position position="68"/>
    </location>
    <ligand>
        <name>shikimate</name>
        <dbReference type="ChEBI" id="CHEBI:36208"/>
    </ligand>
</feature>
<feature type="binding site" evidence="1">
    <location>
        <position position="84"/>
    </location>
    <ligand>
        <name>NADP(+)</name>
        <dbReference type="ChEBI" id="CHEBI:58349"/>
    </ligand>
</feature>
<feature type="binding site" evidence="1">
    <location>
        <position position="93"/>
    </location>
    <ligand>
        <name>shikimate</name>
        <dbReference type="ChEBI" id="CHEBI:36208"/>
    </ligand>
</feature>
<feature type="binding site" evidence="1">
    <location>
        <position position="108"/>
    </location>
    <ligand>
        <name>shikimate</name>
        <dbReference type="ChEBI" id="CHEBI:36208"/>
    </ligand>
</feature>
<feature type="binding site" evidence="1">
    <location>
        <begin position="132"/>
        <end position="136"/>
    </location>
    <ligand>
        <name>NADP(+)</name>
        <dbReference type="ChEBI" id="CHEBI:58349"/>
    </ligand>
</feature>
<feature type="binding site" evidence="1">
    <location>
        <position position="226"/>
    </location>
    <ligand>
        <name>NADP(+)</name>
        <dbReference type="ChEBI" id="CHEBI:58349"/>
    </ligand>
</feature>
<feature type="binding site" evidence="1">
    <location>
        <position position="228"/>
    </location>
    <ligand>
        <name>shikimate</name>
        <dbReference type="ChEBI" id="CHEBI:36208"/>
    </ligand>
</feature>
<feature type="binding site" evidence="1">
    <location>
        <position position="249"/>
    </location>
    <ligand>
        <name>NADP(+)</name>
        <dbReference type="ChEBI" id="CHEBI:58349"/>
    </ligand>
</feature>
<proteinExistence type="inferred from homology"/>
<sequence length="286" mass="30796">MPKISGQTQLLGVIGDPIEHTLSPAMHNAALEYLGLNYVYVPFWVKPQQLGVAIAGLEALNVVGFNVTIPHKETILPYLADVSDLAQQVGAVNTVYRSEKGWVGTNTDVHGFLAPLRQQSCLWSEIAVLVLGYGGAARAVVTACYDLGCRQIYISGRQRERLGAFVASWPQITLHPLLWSERATCLAKISLVVNTTPIGMSPHTGATPLTAEDLAKLPATAIVYDLIYKPRPTLLLQLAMARGLQTFDGLAMLLHQGAAALEYWLGQPAPTAIMATALETALGTEK</sequence>
<name>AROE_THEVB</name>
<evidence type="ECO:0000255" key="1">
    <source>
        <dbReference type="HAMAP-Rule" id="MF_00222"/>
    </source>
</evidence>
<gene>
    <name evidence="1" type="primary">aroE</name>
    <name type="ordered locus">tll0590</name>
</gene>
<comment type="function">
    <text evidence="1">Involved in the biosynthesis of the chorismate, which leads to the biosynthesis of aromatic amino acids. Catalyzes the reversible NADPH linked reduction of 3-dehydroshikimate (DHSA) to yield shikimate (SA).</text>
</comment>
<comment type="catalytic activity">
    <reaction evidence="1">
        <text>shikimate + NADP(+) = 3-dehydroshikimate + NADPH + H(+)</text>
        <dbReference type="Rhea" id="RHEA:17737"/>
        <dbReference type="ChEBI" id="CHEBI:15378"/>
        <dbReference type="ChEBI" id="CHEBI:16630"/>
        <dbReference type="ChEBI" id="CHEBI:36208"/>
        <dbReference type="ChEBI" id="CHEBI:57783"/>
        <dbReference type="ChEBI" id="CHEBI:58349"/>
        <dbReference type="EC" id="1.1.1.25"/>
    </reaction>
</comment>
<comment type="pathway">
    <text evidence="1">Metabolic intermediate biosynthesis; chorismate biosynthesis; chorismate from D-erythrose 4-phosphate and phosphoenolpyruvate: step 4/7.</text>
</comment>
<comment type="subunit">
    <text evidence="1">Homodimer.</text>
</comment>
<comment type="similarity">
    <text evidence="1">Belongs to the shikimate dehydrogenase family.</text>
</comment>
<dbReference type="EC" id="1.1.1.25" evidence="1"/>
<dbReference type="EMBL" id="BA000039">
    <property type="protein sequence ID" value="BAC08142.1"/>
    <property type="molecule type" value="Genomic_DNA"/>
</dbReference>
<dbReference type="RefSeq" id="NP_681380.1">
    <property type="nucleotide sequence ID" value="NC_004113.1"/>
</dbReference>
<dbReference type="RefSeq" id="WP_011056438.1">
    <property type="nucleotide sequence ID" value="NC_004113.1"/>
</dbReference>
<dbReference type="SMR" id="Q8DLA6"/>
<dbReference type="STRING" id="197221.gene:10747180"/>
<dbReference type="EnsemblBacteria" id="BAC08142">
    <property type="protein sequence ID" value="BAC08142"/>
    <property type="gene ID" value="BAC08142"/>
</dbReference>
<dbReference type="KEGG" id="tel:tll0590"/>
<dbReference type="PATRIC" id="fig|197221.4.peg.624"/>
<dbReference type="eggNOG" id="COG0169">
    <property type="taxonomic scope" value="Bacteria"/>
</dbReference>
<dbReference type="UniPathway" id="UPA00053">
    <property type="reaction ID" value="UER00087"/>
</dbReference>
<dbReference type="Proteomes" id="UP000000440">
    <property type="component" value="Chromosome"/>
</dbReference>
<dbReference type="GO" id="GO:0005829">
    <property type="term" value="C:cytosol"/>
    <property type="evidence" value="ECO:0007669"/>
    <property type="project" value="TreeGrafter"/>
</dbReference>
<dbReference type="GO" id="GO:0050661">
    <property type="term" value="F:NADP binding"/>
    <property type="evidence" value="ECO:0007669"/>
    <property type="project" value="InterPro"/>
</dbReference>
<dbReference type="GO" id="GO:0004764">
    <property type="term" value="F:shikimate 3-dehydrogenase (NADP+) activity"/>
    <property type="evidence" value="ECO:0007669"/>
    <property type="project" value="UniProtKB-UniRule"/>
</dbReference>
<dbReference type="GO" id="GO:0008652">
    <property type="term" value="P:amino acid biosynthetic process"/>
    <property type="evidence" value="ECO:0007669"/>
    <property type="project" value="UniProtKB-KW"/>
</dbReference>
<dbReference type="GO" id="GO:0009073">
    <property type="term" value="P:aromatic amino acid family biosynthetic process"/>
    <property type="evidence" value="ECO:0007669"/>
    <property type="project" value="UniProtKB-KW"/>
</dbReference>
<dbReference type="GO" id="GO:0009423">
    <property type="term" value="P:chorismate biosynthetic process"/>
    <property type="evidence" value="ECO:0007669"/>
    <property type="project" value="UniProtKB-UniRule"/>
</dbReference>
<dbReference type="GO" id="GO:0019632">
    <property type="term" value="P:shikimate metabolic process"/>
    <property type="evidence" value="ECO:0007669"/>
    <property type="project" value="InterPro"/>
</dbReference>
<dbReference type="CDD" id="cd01065">
    <property type="entry name" value="NAD_bind_Shikimate_DH"/>
    <property type="match status" value="1"/>
</dbReference>
<dbReference type="Gene3D" id="3.40.50.10860">
    <property type="entry name" value="Leucine Dehydrogenase, chain A, domain 1"/>
    <property type="match status" value="1"/>
</dbReference>
<dbReference type="Gene3D" id="3.40.50.720">
    <property type="entry name" value="NAD(P)-binding Rossmann-like Domain"/>
    <property type="match status" value="1"/>
</dbReference>
<dbReference type="HAMAP" id="MF_00222">
    <property type="entry name" value="Shikimate_DH_AroE"/>
    <property type="match status" value="1"/>
</dbReference>
<dbReference type="InterPro" id="IPR046346">
    <property type="entry name" value="Aminoacid_DH-like_N_sf"/>
</dbReference>
<dbReference type="InterPro" id="IPR036291">
    <property type="entry name" value="NAD(P)-bd_dom_sf"/>
</dbReference>
<dbReference type="InterPro" id="IPR041121">
    <property type="entry name" value="SDH_C"/>
</dbReference>
<dbReference type="InterPro" id="IPR011342">
    <property type="entry name" value="Shikimate_DH"/>
</dbReference>
<dbReference type="InterPro" id="IPR013708">
    <property type="entry name" value="Shikimate_DH-bd_N"/>
</dbReference>
<dbReference type="InterPro" id="IPR022893">
    <property type="entry name" value="Shikimate_DH_fam"/>
</dbReference>
<dbReference type="NCBIfam" id="TIGR00507">
    <property type="entry name" value="aroE"/>
    <property type="match status" value="1"/>
</dbReference>
<dbReference type="NCBIfam" id="NF001314">
    <property type="entry name" value="PRK00258.2-2"/>
    <property type="match status" value="1"/>
</dbReference>
<dbReference type="PANTHER" id="PTHR21089:SF1">
    <property type="entry name" value="BIFUNCTIONAL 3-DEHYDROQUINATE DEHYDRATASE_SHIKIMATE DEHYDROGENASE, CHLOROPLASTIC"/>
    <property type="match status" value="1"/>
</dbReference>
<dbReference type="PANTHER" id="PTHR21089">
    <property type="entry name" value="SHIKIMATE DEHYDROGENASE"/>
    <property type="match status" value="1"/>
</dbReference>
<dbReference type="Pfam" id="PF18317">
    <property type="entry name" value="SDH_C"/>
    <property type="match status" value="1"/>
</dbReference>
<dbReference type="Pfam" id="PF08501">
    <property type="entry name" value="Shikimate_dh_N"/>
    <property type="match status" value="1"/>
</dbReference>
<dbReference type="SUPFAM" id="SSF53223">
    <property type="entry name" value="Aminoacid dehydrogenase-like, N-terminal domain"/>
    <property type="match status" value="1"/>
</dbReference>
<dbReference type="SUPFAM" id="SSF51735">
    <property type="entry name" value="NAD(P)-binding Rossmann-fold domains"/>
    <property type="match status" value="1"/>
</dbReference>
<keyword id="KW-0028">Amino-acid biosynthesis</keyword>
<keyword id="KW-0057">Aromatic amino acid biosynthesis</keyword>
<keyword id="KW-0521">NADP</keyword>
<keyword id="KW-0560">Oxidoreductase</keyword>
<keyword id="KW-1185">Reference proteome</keyword>
<protein>
    <recommendedName>
        <fullName evidence="1">Shikimate dehydrogenase (NADP(+))</fullName>
        <shortName evidence="1">SDH</shortName>
        <ecNumber evidence="1">1.1.1.25</ecNumber>
    </recommendedName>
</protein>
<accession>Q8DLA6</accession>
<reference key="1">
    <citation type="journal article" date="2002" name="DNA Res.">
        <title>Complete genome structure of the thermophilic cyanobacterium Thermosynechococcus elongatus BP-1.</title>
        <authorList>
            <person name="Nakamura Y."/>
            <person name="Kaneko T."/>
            <person name="Sato S."/>
            <person name="Ikeuchi M."/>
            <person name="Katoh H."/>
            <person name="Sasamoto S."/>
            <person name="Watanabe A."/>
            <person name="Iriguchi M."/>
            <person name="Kawashima K."/>
            <person name="Kimura T."/>
            <person name="Kishida Y."/>
            <person name="Kiyokawa C."/>
            <person name="Kohara M."/>
            <person name="Matsumoto M."/>
            <person name="Matsuno A."/>
            <person name="Nakazaki N."/>
            <person name="Shimpo S."/>
            <person name="Sugimoto M."/>
            <person name="Takeuchi C."/>
            <person name="Yamada M."/>
            <person name="Tabata S."/>
        </authorList>
    </citation>
    <scope>NUCLEOTIDE SEQUENCE [LARGE SCALE GENOMIC DNA]</scope>
    <source>
        <strain>NIES-2133 / IAM M-273 / BP-1</strain>
    </source>
</reference>